<accession>B4RCL1</accession>
<gene>
    <name evidence="1" type="primary">trpA</name>
    <name type="ordered locus">PHZ_c0196</name>
</gene>
<keyword id="KW-0028">Amino-acid biosynthesis</keyword>
<keyword id="KW-0057">Aromatic amino acid biosynthesis</keyword>
<keyword id="KW-0456">Lyase</keyword>
<keyword id="KW-1185">Reference proteome</keyword>
<keyword id="KW-0822">Tryptophan biosynthesis</keyword>
<evidence type="ECO:0000255" key="1">
    <source>
        <dbReference type="HAMAP-Rule" id="MF_00131"/>
    </source>
</evidence>
<dbReference type="EC" id="4.2.1.20" evidence="1"/>
<dbReference type="EMBL" id="CP000747">
    <property type="protein sequence ID" value="ACG76610.1"/>
    <property type="molecule type" value="Genomic_DNA"/>
</dbReference>
<dbReference type="RefSeq" id="WP_012520758.1">
    <property type="nucleotide sequence ID" value="NC_011144.1"/>
</dbReference>
<dbReference type="SMR" id="B4RCL1"/>
<dbReference type="STRING" id="450851.PHZ_c0196"/>
<dbReference type="KEGG" id="pzu:PHZ_c0196"/>
<dbReference type="eggNOG" id="COG0159">
    <property type="taxonomic scope" value="Bacteria"/>
</dbReference>
<dbReference type="HOGENOM" id="CLU_016734_0_0_5"/>
<dbReference type="OrthoDB" id="9804578at2"/>
<dbReference type="UniPathway" id="UPA00035">
    <property type="reaction ID" value="UER00044"/>
</dbReference>
<dbReference type="Proteomes" id="UP000001868">
    <property type="component" value="Chromosome"/>
</dbReference>
<dbReference type="GO" id="GO:0005829">
    <property type="term" value="C:cytosol"/>
    <property type="evidence" value="ECO:0007669"/>
    <property type="project" value="TreeGrafter"/>
</dbReference>
<dbReference type="GO" id="GO:0004834">
    <property type="term" value="F:tryptophan synthase activity"/>
    <property type="evidence" value="ECO:0007669"/>
    <property type="project" value="UniProtKB-UniRule"/>
</dbReference>
<dbReference type="CDD" id="cd04724">
    <property type="entry name" value="Tryptophan_synthase_alpha"/>
    <property type="match status" value="1"/>
</dbReference>
<dbReference type="FunFam" id="3.20.20.70:FF:000037">
    <property type="entry name" value="Tryptophan synthase alpha chain"/>
    <property type="match status" value="1"/>
</dbReference>
<dbReference type="Gene3D" id="3.20.20.70">
    <property type="entry name" value="Aldolase class I"/>
    <property type="match status" value="1"/>
</dbReference>
<dbReference type="HAMAP" id="MF_00131">
    <property type="entry name" value="Trp_synth_alpha"/>
    <property type="match status" value="1"/>
</dbReference>
<dbReference type="InterPro" id="IPR013785">
    <property type="entry name" value="Aldolase_TIM"/>
</dbReference>
<dbReference type="InterPro" id="IPR011060">
    <property type="entry name" value="RibuloseP-bd_barrel"/>
</dbReference>
<dbReference type="InterPro" id="IPR018204">
    <property type="entry name" value="Trp_synthase_alpha_AS"/>
</dbReference>
<dbReference type="InterPro" id="IPR002028">
    <property type="entry name" value="Trp_synthase_suA"/>
</dbReference>
<dbReference type="NCBIfam" id="TIGR00262">
    <property type="entry name" value="trpA"/>
    <property type="match status" value="1"/>
</dbReference>
<dbReference type="PANTHER" id="PTHR43406:SF1">
    <property type="entry name" value="TRYPTOPHAN SYNTHASE ALPHA CHAIN, CHLOROPLASTIC"/>
    <property type="match status" value="1"/>
</dbReference>
<dbReference type="PANTHER" id="PTHR43406">
    <property type="entry name" value="TRYPTOPHAN SYNTHASE, ALPHA CHAIN"/>
    <property type="match status" value="1"/>
</dbReference>
<dbReference type="Pfam" id="PF00290">
    <property type="entry name" value="Trp_syntA"/>
    <property type="match status" value="1"/>
</dbReference>
<dbReference type="SUPFAM" id="SSF51366">
    <property type="entry name" value="Ribulose-phoshate binding barrel"/>
    <property type="match status" value="1"/>
</dbReference>
<dbReference type="PROSITE" id="PS00167">
    <property type="entry name" value="TRP_SYNTHASE_ALPHA"/>
    <property type="match status" value="1"/>
</dbReference>
<proteinExistence type="inferred from homology"/>
<comment type="function">
    <text evidence="1">The alpha subunit is responsible for the aldol cleavage of indoleglycerol phosphate to indole and glyceraldehyde 3-phosphate.</text>
</comment>
<comment type="catalytic activity">
    <reaction evidence="1">
        <text>(1S,2R)-1-C-(indol-3-yl)glycerol 3-phosphate + L-serine = D-glyceraldehyde 3-phosphate + L-tryptophan + H2O</text>
        <dbReference type="Rhea" id="RHEA:10532"/>
        <dbReference type="ChEBI" id="CHEBI:15377"/>
        <dbReference type="ChEBI" id="CHEBI:33384"/>
        <dbReference type="ChEBI" id="CHEBI:57912"/>
        <dbReference type="ChEBI" id="CHEBI:58866"/>
        <dbReference type="ChEBI" id="CHEBI:59776"/>
        <dbReference type="EC" id="4.2.1.20"/>
    </reaction>
</comment>
<comment type="pathway">
    <text evidence="1">Amino-acid biosynthesis; L-tryptophan biosynthesis; L-tryptophan from chorismate: step 5/5.</text>
</comment>
<comment type="subunit">
    <text evidence="1">Tetramer of two alpha and two beta chains.</text>
</comment>
<comment type="similarity">
    <text evidence="1">Belongs to the TrpA family.</text>
</comment>
<feature type="chain" id="PRO_1000095737" description="Tryptophan synthase alpha chain">
    <location>
        <begin position="1"/>
        <end position="277"/>
    </location>
</feature>
<feature type="active site" description="Proton acceptor" evidence="1">
    <location>
        <position position="51"/>
    </location>
</feature>
<feature type="active site" description="Proton acceptor" evidence="1">
    <location>
        <position position="62"/>
    </location>
</feature>
<reference key="1">
    <citation type="journal article" date="2008" name="BMC Genomics">
        <title>Complete genome of Phenylobacterium zucineum - a novel facultative intracellular bacterium isolated from human erythroleukemia cell line K562.</title>
        <authorList>
            <person name="Luo Y."/>
            <person name="Xu X."/>
            <person name="Ding Z."/>
            <person name="Liu Z."/>
            <person name="Zhang B."/>
            <person name="Yan Z."/>
            <person name="Sun J."/>
            <person name="Hu S."/>
            <person name="Hu X."/>
        </authorList>
    </citation>
    <scope>NUCLEOTIDE SEQUENCE [LARGE SCALE GENOMIC DNA]</scope>
    <source>
        <strain>HLK1</strain>
    </source>
</reference>
<sequence length="277" mass="28814">MTKARIDARFAELAREGRAAFVPYVMAGDPDRETALAILKGLPAAGADIIELGFPFSDPMAEGPPIQRAAGRALAKGMTLQGVLDLVRAFRAGDATTPLILMGYMNPLVTWGLEAFARDASDAGVDGLIIVDCPPEEADPLADALDAAGVSLIRLATPTTGDARLKVVVRRTSGFVYYVSVAGVTGVKEADAAAVAPNVERVRKASGLPVAVGFGIKTPERAAQVAQVADAVVVGSALVDEVAEAVDMNEDVTARVLSKVESLAKAVRLARRSHEAV</sequence>
<protein>
    <recommendedName>
        <fullName evidence="1">Tryptophan synthase alpha chain</fullName>
        <ecNumber evidence="1">4.2.1.20</ecNumber>
    </recommendedName>
</protein>
<name>TRPA_PHEZH</name>
<organism>
    <name type="scientific">Phenylobacterium zucineum (strain HLK1)</name>
    <dbReference type="NCBI Taxonomy" id="450851"/>
    <lineage>
        <taxon>Bacteria</taxon>
        <taxon>Pseudomonadati</taxon>
        <taxon>Pseudomonadota</taxon>
        <taxon>Alphaproteobacteria</taxon>
        <taxon>Caulobacterales</taxon>
        <taxon>Caulobacteraceae</taxon>
        <taxon>Phenylobacterium</taxon>
    </lineage>
</organism>